<gene>
    <name evidence="1" type="primary">rpsD</name>
    <name type="ordered locus">Dred_0242</name>
</gene>
<evidence type="ECO:0000255" key="1">
    <source>
        <dbReference type="HAMAP-Rule" id="MF_01306"/>
    </source>
</evidence>
<evidence type="ECO:0000305" key="2"/>
<accession>A4J138</accession>
<proteinExistence type="inferred from homology"/>
<name>RS4_DESRM</name>
<sequence length="208" mass="23923">MARYTGPHCRQCRREGLKLYLKGDRCYTGKCAIDRRSYAPGQHGQGRKKVSEYGIQLRAKQKARRIYGVLEKPFRNYFEHAERQPGITGENLLRLLERRLDNVVYRLGLGASRVEARQLVRHGHFTVNGKKVNIPSFQVRVGDEIAVREKSKASPRIKELVERAADRTTPAWLEYDGQEAKGRVIALPSRDQIDAPVEEHLIVELYSR</sequence>
<organism>
    <name type="scientific">Desulforamulus reducens (strain ATCC BAA-1160 / DSM 100696 / MI-1)</name>
    <name type="common">Desulfotomaculum reducens</name>
    <dbReference type="NCBI Taxonomy" id="349161"/>
    <lineage>
        <taxon>Bacteria</taxon>
        <taxon>Bacillati</taxon>
        <taxon>Bacillota</taxon>
        <taxon>Clostridia</taxon>
        <taxon>Eubacteriales</taxon>
        <taxon>Peptococcaceae</taxon>
        <taxon>Desulforamulus</taxon>
    </lineage>
</organism>
<protein>
    <recommendedName>
        <fullName evidence="1">Small ribosomal subunit protein uS4</fullName>
    </recommendedName>
    <alternativeName>
        <fullName evidence="2">30S ribosomal protein S4</fullName>
    </alternativeName>
</protein>
<dbReference type="EMBL" id="CP000612">
    <property type="protein sequence ID" value="ABO48791.1"/>
    <property type="molecule type" value="Genomic_DNA"/>
</dbReference>
<dbReference type="RefSeq" id="WP_011876629.1">
    <property type="nucleotide sequence ID" value="NC_009253.1"/>
</dbReference>
<dbReference type="SMR" id="A4J138"/>
<dbReference type="STRING" id="349161.Dred_0242"/>
<dbReference type="KEGG" id="drm:Dred_0242"/>
<dbReference type="eggNOG" id="COG0522">
    <property type="taxonomic scope" value="Bacteria"/>
</dbReference>
<dbReference type="HOGENOM" id="CLU_092403_0_2_9"/>
<dbReference type="OrthoDB" id="9803672at2"/>
<dbReference type="Proteomes" id="UP000001556">
    <property type="component" value="Chromosome"/>
</dbReference>
<dbReference type="GO" id="GO:0015935">
    <property type="term" value="C:small ribosomal subunit"/>
    <property type="evidence" value="ECO:0007669"/>
    <property type="project" value="InterPro"/>
</dbReference>
<dbReference type="GO" id="GO:0019843">
    <property type="term" value="F:rRNA binding"/>
    <property type="evidence" value="ECO:0007669"/>
    <property type="project" value="UniProtKB-UniRule"/>
</dbReference>
<dbReference type="GO" id="GO:0003735">
    <property type="term" value="F:structural constituent of ribosome"/>
    <property type="evidence" value="ECO:0007669"/>
    <property type="project" value="InterPro"/>
</dbReference>
<dbReference type="GO" id="GO:0042274">
    <property type="term" value="P:ribosomal small subunit biogenesis"/>
    <property type="evidence" value="ECO:0007669"/>
    <property type="project" value="TreeGrafter"/>
</dbReference>
<dbReference type="GO" id="GO:0006412">
    <property type="term" value="P:translation"/>
    <property type="evidence" value="ECO:0007669"/>
    <property type="project" value="UniProtKB-UniRule"/>
</dbReference>
<dbReference type="CDD" id="cd00165">
    <property type="entry name" value="S4"/>
    <property type="match status" value="1"/>
</dbReference>
<dbReference type="FunFam" id="1.10.1050.10:FF:000001">
    <property type="entry name" value="30S ribosomal protein S4"/>
    <property type="match status" value="1"/>
</dbReference>
<dbReference type="FunFam" id="3.10.290.10:FF:000001">
    <property type="entry name" value="30S ribosomal protein S4"/>
    <property type="match status" value="1"/>
</dbReference>
<dbReference type="Gene3D" id="1.10.1050.10">
    <property type="entry name" value="Ribosomal Protein S4 Delta 41, Chain A, domain 1"/>
    <property type="match status" value="1"/>
</dbReference>
<dbReference type="Gene3D" id="3.10.290.10">
    <property type="entry name" value="RNA-binding S4 domain"/>
    <property type="match status" value="1"/>
</dbReference>
<dbReference type="HAMAP" id="MF_01306_B">
    <property type="entry name" value="Ribosomal_uS4_B"/>
    <property type="match status" value="1"/>
</dbReference>
<dbReference type="InterPro" id="IPR022801">
    <property type="entry name" value="Ribosomal_uS4"/>
</dbReference>
<dbReference type="InterPro" id="IPR005709">
    <property type="entry name" value="Ribosomal_uS4_bac-type"/>
</dbReference>
<dbReference type="InterPro" id="IPR018079">
    <property type="entry name" value="Ribosomal_uS4_CS"/>
</dbReference>
<dbReference type="InterPro" id="IPR001912">
    <property type="entry name" value="Ribosomal_uS4_N"/>
</dbReference>
<dbReference type="InterPro" id="IPR002942">
    <property type="entry name" value="S4_RNA-bd"/>
</dbReference>
<dbReference type="InterPro" id="IPR036986">
    <property type="entry name" value="S4_RNA-bd_sf"/>
</dbReference>
<dbReference type="NCBIfam" id="NF003717">
    <property type="entry name" value="PRK05327.1"/>
    <property type="match status" value="1"/>
</dbReference>
<dbReference type="NCBIfam" id="TIGR01017">
    <property type="entry name" value="rpsD_bact"/>
    <property type="match status" value="1"/>
</dbReference>
<dbReference type="PANTHER" id="PTHR11831">
    <property type="entry name" value="30S 40S RIBOSOMAL PROTEIN"/>
    <property type="match status" value="1"/>
</dbReference>
<dbReference type="PANTHER" id="PTHR11831:SF4">
    <property type="entry name" value="SMALL RIBOSOMAL SUBUNIT PROTEIN US4M"/>
    <property type="match status" value="1"/>
</dbReference>
<dbReference type="Pfam" id="PF00163">
    <property type="entry name" value="Ribosomal_S4"/>
    <property type="match status" value="1"/>
</dbReference>
<dbReference type="Pfam" id="PF01479">
    <property type="entry name" value="S4"/>
    <property type="match status" value="1"/>
</dbReference>
<dbReference type="SMART" id="SM01390">
    <property type="entry name" value="Ribosomal_S4"/>
    <property type="match status" value="1"/>
</dbReference>
<dbReference type="SMART" id="SM00363">
    <property type="entry name" value="S4"/>
    <property type="match status" value="1"/>
</dbReference>
<dbReference type="SUPFAM" id="SSF55174">
    <property type="entry name" value="Alpha-L RNA-binding motif"/>
    <property type="match status" value="1"/>
</dbReference>
<dbReference type="PROSITE" id="PS00632">
    <property type="entry name" value="RIBOSOMAL_S4"/>
    <property type="match status" value="1"/>
</dbReference>
<dbReference type="PROSITE" id="PS50889">
    <property type="entry name" value="S4"/>
    <property type="match status" value="1"/>
</dbReference>
<comment type="function">
    <text evidence="1">One of the primary rRNA binding proteins, it binds directly to 16S rRNA where it nucleates assembly of the body of the 30S subunit.</text>
</comment>
<comment type="function">
    <text evidence="1">With S5 and S12 plays an important role in translational accuracy.</text>
</comment>
<comment type="subunit">
    <text evidence="1">Part of the 30S ribosomal subunit. Contacts protein S5. The interaction surface between S4 and S5 is involved in control of translational fidelity.</text>
</comment>
<comment type="similarity">
    <text evidence="1">Belongs to the universal ribosomal protein uS4 family.</text>
</comment>
<keyword id="KW-1185">Reference proteome</keyword>
<keyword id="KW-0687">Ribonucleoprotein</keyword>
<keyword id="KW-0689">Ribosomal protein</keyword>
<keyword id="KW-0694">RNA-binding</keyword>
<keyword id="KW-0699">rRNA-binding</keyword>
<reference key="1">
    <citation type="submission" date="2007-03" db="EMBL/GenBank/DDBJ databases">
        <title>Complete sequence of Desulfotomaculum reducens MI-1.</title>
        <authorList>
            <consortium name="US DOE Joint Genome Institute"/>
            <person name="Copeland A."/>
            <person name="Lucas S."/>
            <person name="Lapidus A."/>
            <person name="Barry K."/>
            <person name="Detter J.C."/>
            <person name="Glavina del Rio T."/>
            <person name="Hammon N."/>
            <person name="Israni S."/>
            <person name="Dalin E."/>
            <person name="Tice H."/>
            <person name="Pitluck S."/>
            <person name="Sims D."/>
            <person name="Brettin T."/>
            <person name="Bruce D."/>
            <person name="Han C."/>
            <person name="Tapia R."/>
            <person name="Schmutz J."/>
            <person name="Larimer F."/>
            <person name="Land M."/>
            <person name="Hauser L."/>
            <person name="Kyrpides N."/>
            <person name="Kim E."/>
            <person name="Tebo B.M."/>
            <person name="Richardson P."/>
        </authorList>
    </citation>
    <scope>NUCLEOTIDE SEQUENCE [LARGE SCALE GENOMIC DNA]</scope>
    <source>
        <strain>ATCC BAA-1160 / DSM 100696 / MI-1</strain>
    </source>
</reference>
<feature type="chain" id="PRO_0000322293" description="Small ribosomal subunit protein uS4">
    <location>
        <begin position="1"/>
        <end position="208"/>
    </location>
</feature>
<feature type="domain" description="S4 RNA-binding" evidence="1">
    <location>
        <begin position="98"/>
        <end position="161"/>
    </location>
</feature>